<evidence type="ECO:0000255" key="1">
    <source>
        <dbReference type="HAMAP-Rule" id="MF_00540"/>
    </source>
</evidence>
<gene>
    <name evidence="1" type="primary">add</name>
    <name type="ordered locus">EcolC_2007</name>
</gene>
<sequence length="333" mass="36397">MIDTTLPLTDIHRHLDGNIRPQTILELGRQYNISLPAQSLETLIPHVQVIANEPDLVSFLTKLDWGVKVLASLDACRRVAFENIEDAARHGLHYVELRFSPGYMAMAHQLPVAGVVEAVIDGVREGCRTFGVQAKLIGIMSRTFGEAACQQELEAFLAHRDQITALDLAGDELGFPGSLFLSHFNRARDAGWHITVHAGEAAGPESIWQAIRELGAERIGHGVKAIEDRALMDFLAEQQIGIESCLTSNIQTSTVAELAAHPLKTFLEHGIRASINTDDPGVQGVDIIHEYTVAAPAAGLSREQIRQAQINGLEMAFLSAEEKRALREKVAAK</sequence>
<keyword id="KW-0378">Hydrolase</keyword>
<keyword id="KW-0479">Metal-binding</keyword>
<keyword id="KW-0546">Nucleotide metabolism</keyword>
<keyword id="KW-0862">Zinc</keyword>
<organism>
    <name type="scientific">Escherichia coli (strain ATCC 8739 / DSM 1576 / NBRC 3972 / NCIMB 8545 / WDCM 00012 / Crooks)</name>
    <dbReference type="NCBI Taxonomy" id="481805"/>
    <lineage>
        <taxon>Bacteria</taxon>
        <taxon>Pseudomonadati</taxon>
        <taxon>Pseudomonadota</taxon>
        <taxon>Gammaproteobacteria</taxon>
        <taxon>Enterobacterales</taxon>
        <taxon>Enterobacteriaceae</taxon>
        <taxon>Escherichia</taxon>
    </lineage>
</organism>
<protein>
    <recommendedName>
        <fullName evidence="1">Adenosine deaminase</fullName>
        <ecNumber evidence="1">3.5.4.4</ecNumber>
    </recommendedName>
    <alternativeName>
        <fullName evidence="1">Adenosine aminohydrolase</fullName>
    </alternativeName>
</protein>
<feature type="chain" id="PRO_1000081923" description="Adenosine deaminase">
    <location>
        <begin position="1"/>
        <end position="333"/>
    </location>
</feature>
<feature type="active site" description="Proton donor" evidence="1">
    <location>
        <position position="200"/>
    </location>
</feature>
<feature type="binding site" evidence="1">
    <location>
        <position position="12"/>
    </location>
    <ligand>
        <name>Zn(2+)</name>
        <dbReference type="ChEBI" id="CHEBI:29105"/>
        <note>catalytic</note>
    </ligand>
</feature>
<feature type="binding site" evidence="1">
    <location>
        <position position="14"/>
    </location>
    <ligand>
        <name>substrate</name>
    </ligand>
</feature>
<feature type="binding site" evidence="1">
    <location>
        <position position="14"/>
    </location>
    <ligand>
        <name>Zn(2+)</name>
        <dbReference type="ChEBI" id="CHEBI:29105"/>
        <note>catalytic</note>
    </ligand>
</feature>
<feature type="binding site" evidence="1">
    <location>
        <position position="16"/>
    </location>
    <ligand>
        <name>substrate</name>
    </ligand>
</feature>
<feature type="binding site" evidence="1">
    <location>
        <position position="170"/>
    </location>
    <ligand>
        <name>substrate</name>
    </ligand>
</feature>
<feature type="binding site" evidence="1">
    <location>
        <position position="197"/>
    </location>
    <ligand>
        <name>Zn(2+)</name>
        <dbReference type="ChEBI" id="CHEBI:29105"/>
        <note>catalytic</note>
    </ligand>
</feature>
<feature type="binding site" evidence="1">
    <location>
        <position position="278"/>
    </location>
    <ligand>
        <name>Zn(2+)</name>
        <dbReference type="ChEBI" id="CHEBI:29105"/>
        <note>catalytic</note>
    </ligand>
</feature>
<feature type="binding site" evidence="1">
    <location>
        <position position="279"/>
    </location>
    <ligand>
        <name>substrate</name>
    </ligand>
</feature>
<feature type="site" description="Important for catalytic activity" evidence="1">
    <location>
        <position position="221"/>
    </location>
</feature>
<reference key="1">
    <citation type="submission" date="2008-02" db="EMBL/GenBank/DDBJ databases">
        <title>Complete sequence of Escherichia coli C str. ATCC 8739.</title>
        <authorList>
            <person name="Copeland A."/>
            <person name="Lucas S."/>
            <person name="Lapidus A."/>
            <person name="Glavina del Rio T."/>
            <person name="Dalin E."/>
            <person name="Tice H."/>
            <person name="Bruce D."/>
            <person name="Goodwin L."/>
            <person name="Pitluck S."/>
            <person name="Kiss H."/>
            <person name="Brettin T."/>
            <person name="Detter J.C."/>
            <person name="Han C."/>
            <person name="Kuske C.R."/>
            <person name="Schmutz J."/>
            <person name="Larimer F."/>
            <person name="Land M."/>
            <person name="Hauser L."/>
            <person name="Kyrpides N."/>
            <person name="Mikhailova N."/>
            <person name="Ingram L."/>
            <person name="Richardson P."/>
        </authorList>
    </citation>
    <scope>NUCLEOTIDE SEQUENCE [LARGE SCALE GENOMIC DNA]</scope>
    <source>
        <strain>ATCC 8739 / DSM 1576 / NBRC 3972 / NCIMB 8545 / WDCM 00012 / Crooks</strain>
    </source>
</reference>
<dbReference type="EC" id="3.5.4.4" evidence="1"/>
<dbReference type="EMBL" id="CP000946">
    <property type="protein sequence ID" value="ACA77653.1"/>
    <property type="molecule type" value="Genomic_DNA"/>
</dbReference>
<dbReference type="RefSeq" id="WP_000567490.1">
    <property type="nucleotide sequence ID" value="NZ_MTFT01000006.1"/>
</dbReference>
<dbReference type="SMR" id="B1IQD2"/>
<dbReference type="GeneID" id="75204467"/>
<dbReference type="KEGG" id="ecl:EcolC_2007"/>
<dbReference type="HOGENOM" id="CLU_039228_0_2_6"/>
<dbReference type="GO" id="GO:0005829">
    <property type="term" value="C:cytosol"/>
    <property type="evidence" value="ECO:0007669"/>
    <property type="project" value="TreeGrafter"/>
</dbReference>
<dbReference type="GO" id="GO:0046936">
    <property type="term" value="F:2'-deoxyadenosine deaminase activity"/>
    <property type="evidence" value="ECO:0007669"/>
    <property type="project" value="RHEA"/>
</dbReference>
<dbReference type="GO" id="GO:0004000">
    <property type="term" value="F:adenosine deaminase activity"/>
    <property type="evidence" value="ECO:0007669"/>
    <property type="project" value="UniProtKB-UniRule"/>
</dbReference>
<dbReference type="GO" id="GO:0008270">
    <property type="term" value="F:zinc ion binding"/>
    <property type="evidence" value="ECO:0007669"/>
    <property type="project" value="UniProtKB-UniRule"/>
</dbReference>
<dbReference type="GO" id="GO:0006154">
    <property type="term" value="P:adenosine catabolic process"/>
    <property type="evidence" value="ECO:0007669"/>
    <property type="project" value="TreeGrafter"/>
</dbReference>
<dbReference type="GO" id="GO:0043103">
    <property type="term" value="P:hypoxanthine salvage"/>
    <property type="evidence" value="ECO:0007669"/>
    <property type="project" value="TreeGrafter"/>
</dbReference>
<dbReference type="GO" id="GO:0046103">
    <property type="term" value="P:inosine biosynthetic process"/>
    <property type="evidence" value="ECO:0007669"/>
    <property type="project" value="TreeGrafter"/>
</dbReference>
<dbReference type="GO" id="GO:0009117">
    <property type="term" value="P:nucleotide metabolic process"/>
    <property type="evidence" value="ECO:0007669"/>
    <property type="project" value="UniProtKB-KW"/>
</dbReference>
<dbReference type="GO" id="GO:0009168">
    <property type="term" value="P:purine ribonucleoside monophosphate biosynthetic process"/>
    <property type="evidence" value="ECO:0007669"/>
    <property type="project" value="UniProtKB-UniRule"/>
</dbReference>
<dbReference type="CDD" id="cd01320">
    <property type="entry name" value="ADA"/>
    <property type="match status" value="1"/>
</dbReference>
<dbReference type="FunFam" id="3.20.20.140:FF:000009">
    <property type="entry name" value="Adenosine deaminase"/>
    <property type="match status" value="1"/>
</dbReference>
<dbReference type="Gene3D" id="3.20.20.140">
    <property type="entry name" value="Metal-dependent hydrolases"/>
    <property type="match status" value="1"/>
</dbReference>
<dbReference type="HAMAP" id="MF_00540">
    <property type="entry name" value="A_deaminase"/>
    <property type="match status" value="1"/>
</dbReference>
<dbReference type="InterPro" id="IPR006650">
    <property type="entry name" value="A/AMP_deam_AS"/>
</dbReference>
<dbReference type="InterPro" id="IPR028893">
    <property type="entry name" value="A_deaminase"/>
</dbReference>
<dbReference type="InterPro" id="IPR001365">
    <property type="entry name" value="A_deaminase_dom"/>
</dbReference>
<dbReference type="InterPro" id="IPR006330">
    <property type="entry name" value="Ado/ade_deaminase"/>
</dbReference>
<dbReference type="InterPro" id="IPR032466">
    <property type="entry name" value="Metal_Hydrolase"/>
</dbReference>
<dbReference type="NCBIfam" id="TIGR01430">
    <property type="entry name" value="aden_deam"/>
    <property type="match status" value="1"/>
</dbReference>
<dbReference type="NCBIfam" id="NF006846">
    <property type="entry name" value="PRK09358.1-1"/>
    <property type="match status" value="1"/>
</dbReference>
<dbReference type="PANTHER" id="PTHR11409">
    <property type="entry name" value="ADENOSINE DEAMINASE"/>
    <property type="match status" value="1"/>
</dbReference>
<dbReference type="PANTHER" id="PTHR11409:SF43">
    <property type="entry name" value="ADENOSINE DEAMINASE"/>
    <property type="match status" value="1"/>
</dbReference>
<dbReference type="Pfam" id="PF00962">
    <property type="entry name" value="A_deaminase"/>
    <property type="match status" value="1"/>
</dbReference>
<dbReference type="SUPFAM" id="SSF51556">
    <property type="entry name" value="Metallo-dependent hydrolases"/>
    <property type="match status" value="1"/>
</dbReference>
<dbReference type="PROSITE" id="PS00485">
    <property type="entry name" value="A_DEAMINASE"/>
    <property type="match status" value="1"/>
</dbReference>
<proteinExistence type="inferred from homology"/>
<accession>B1IQD2</accession>
<comment type="function">
    <text evidence="1">Catalyzes the hydrolytic deamination of adenosine and 2-deoxyadenosine.</text>
</comment>
<comment type="catalytic activity">
    <reaction evidence="1">
        <text>adenosine + H2O + H(+) = inosine + NH4(+)</text>
        <dbReference type="Rhea" id="RHEA:24408"/>
        <dbReference type="ChEBI" id="CHEBI:15377"/>
        <dbReference type="ChEBI" id="CHEBI:15378"/>
        <dbReference type="ChEBI" id="CHEBI:16335"/>
        <dbReference type="ChEBI" id="CHEBI:17596"/>
        <dbReference type="ChEBI" id="CHEBI:28938"/>
        <dbReference type="EC" id="3.5.4.4"/>
    </reaction>
    <physiologicalReaction direction="left-to-right" evidence="1">
        <dbReference type="Rhea" id="RHEA:24409"/>
    </physiologicalReaction>
</comment>
<comment type="catalytic activity">
    <reaction evidence="1">
        <text>2'-deoxyadenosine + H2O + H(+) = 2'-deoxyinosine + NH4(+)</text>
        <dbReference type="Rhea" id="RHEA:28190"/>
        <dbReference type="ChEBI" id="CHEBI:15377"/>
        <dbReference type="ChEBI" id="CHEBI:15378"/>
        <dbReference type="ChEBI" id="CHEBI:17256"/>
        <dbReference type="ChEBI" id="CHEBI:28938"/>
        <dbReference type="ChEBI" id="CHEBI:28997"/>
        <dbReference type="EC" id="3.5.4.4"/>
    </reaction>
    <physiologicalReaction direction="left-to-right" evidence="1">
        <dbReference type="Rhea" id="RHEA:28191"/>
    </physiologicalReaction>
</comment>
<comment type="cofactor">
    <cofactor evidence="1">
        <name>Zn(2+)</name>
        <dbReference type="ChEBI" id="CHEBI:29105"/>
    </cofactor>
    <text evidence="1">Binds 1 zinc ion per subunit.</text>
</comment>
<comment type="similarity">
    <text evidence="1">Belongs to the metallo-dependent hydrolases superfamily. Adenosine and AMP deaminases family. Adenosine deaminase subfamily.</text>
</comment>
<name>ADD_ECOLC</name>